<reference key="1">
    <citation type="journal article" date="1997" name="J. Bacteriol.">
        <title>6-phospho-alpha-D-glucosidase from Fusobacterium mortiferum: cloning, expression, and assignment to family 4 of the glycosylhydrolases.</title>
        <authorList>
            <person name="Bouma C.L."/>
            <person name="Reizer J."/>
            <person name="Reizer A."/>
            <person name="Robrish S.A."/>
            <person name="Thompson J."/>
        </authorList>
    </citation>
    <scope>NUCLEOTIDE SEQUENCE [GENOMIC DNA]</scope>
    <source>
        <strain>ATCC 25557 / DSM 19809 / CCUG 14475 / VPI 4123A</strain>
    </source>
</reference>
<reference key="2">
    <citation type="journal article" date="1995" name="J. Bacteriol.">
        <title>Purification from Fusobacterium mortiferum ATCC 25557 of a 6-phosphoryl-O-alpha-D-glucopyranosyl:6-phosphoglucohydrolase that hydrolyzes maltose 6-phosphate and related phospho-alpha-D-glucosides.</title>
        <authorList>
            <person name="Thompson J."/>
            <person name="Gentry-Weeks C.R."/>
            <person name="Nguyen N.Y."/>
            <person name="Folk J.E."/>
            <person name="Robrish S.A."/>
        </authorList>
    </citation>
    <scope>PROTEIN SEQUENCE OF 1-32</scope>
    <scope>CHARACTERIZATION</scope>
    <source>
        <strain>ATCC 25557 / DSM 19809 / CCUG 14475 / VPI 4123A</strain>
    </source>
</reference>
<reference key="3">
    <citation type="journal article" date="2002" name="Microbiology">
        <title>Metabolism of sucrose and its five isomers by Fusobacterium mortiferum.</title>
        <authorList>
            <person name="Pikis A."/>
            <person name="Immel S."/>
            <person name="Robrish S.A."/>
            <person name="Thompson J."/>
        </authorList>
    </citation>
    <scope>SUBSTRATE SPECIFICITY</scope>
    <source>
        <strain>ATCC 25557 / DSM 19809 / CCUG 14475 / VPI 4123A</strain>
    </source>
</reference>
<gene>
    <name type="primary">malH</name>
</gene>
<proteinExistence type="evidence at protein level"/>
<comment type="function">
    <text>Hydrolyzes a wide variety of 6-phospho-alpha-D-glucosides including maltose-6'P, trehalose-6P and the 6'-phosphorylated derivatives of the five linkage-isomeric alpha-D-glucosyl-D-fructoses: trehalulose-6'P, turanose-6'P, maltulose-6'P, leucrose-6'P, and palatinose-6'P. However, sucrose-6P is not a substrate for MalH, and this enzyme also fails to hydrolyze beta-O-linked phosphorylated disaccharides such as cellobiose-6'P and gentobiose-6'P.</text>
</comment>
<comment type="catalytic activity">
    <reaction>
        <text>alpha-maltose 6'-phosphate + H2O = D-glucose 6-phosphate + D-glucose</text>
        <dbReference type="Rhea" id="RHEA:20421"/>
        <dbReference type="ChEBI" id="CHEBI:4167"/>
        <dbReference type="ChEBI" id="CHEBI:15377"/>
        <dbReference type="ChEBI" id="CHEBI:57478"/>
        <dbReference type="ChEBI" id="CHEBI:61548"/>
        <dbReference type="EC" id="3.2.1.122"/>
    </reaction>
</comment>
<comment type="cofactor">
    <cofactor>
        <name>NAD(+)</name>
        <dbReference type="ChEBI" id="CHEBI:57540"/>
    </cofactor>
</comment>
<comment type="cofactor">
    <cofactor>
        <name>Mn(2+)</name>
        <dbReference type="ChEBI" id="CHEBI:29035"/>
    </cofactor>
    <cofactor>
        <name>Fe(2+)</name>
        <dbReference type="ChEBI" id="CHEBI:29033"/>
    </cofactor>
    <cofactor>
        <name>Co(2+)</name>
        <dbReference type="ChEBI" id="CHEBI:48828"/>
    </cofactor>
    <cofactor>
        <name>Ni(2+)</name>
        <dbReference type="ChEBI" id="CHEBI:49786"/>
    </cofactor>
    <text>Divalent metal ion. Manganese, iron, cobalt and nickel ions enhance activity whereas magnesium, zinc, calcium and strontium do not.</text>
</comment>
<comment type="biophysicochemical properties">
    <phDependence>
        <text>Optimum pH is 7.0-7.5.</text>
    </phDependence>
    <temperatureDependence>
        <text>Optimum temperature is 40 degrees Celsius.</text>
    </temperatureDependence>
</comment>
<comment type="pathway">
    <text>Glycan degradation; maltose degradation.</text>
</comment>
<comment type="subunit">
    <text evidence="1">Homotetramer.</text>
</comment>
<comment type="induction">
    <text>By the five sucrose isomers and other alpha-glucosides (but not by sucrose or glucose).</text>
</comment>
<comment type="similarity">
    <text evidence="2">Belongs to the glycosyl hydrolase 4 family.</text>
</comment>
<evidence type="ECO:0000250" key="1"/>
<evidence type="ECO:0000305" key="2"/>
<organism>
    <name type="scientific">Fusobacterium mortiferum</name>
    <dbReference type="NCBI Taxonomy" id="850"/>
    <lineage>
        <taxon>Bacteria</taxon>
        <taxon>Fusobacteriati</taxon>
        <taxon>Fusobacteriota</taxon>
        <taxon>Fusobacteriia</taxon>
        <taxon>Fusobacteriales</taxon>
        <taxon>Fusobacteriaceae</taxon>
        <taxon>Fusobacterium</taxon>
    </lineage>
</organism>
<dbReference type="EC" id="3.2.1.122"/>
<dbReference type="EMBL" id="U81185">
    <property type="protein sequence ID" value="AAB63015.1"/>
    <property type="molecule type" value="Genomic_DNA"/>
</dbReference>
<dbReference type="RefSeq" id="WP_005886208.1">
    <property type="nucleotide sequence ID" value="NZ_QSTZ01000004.1"/>
</dbReference>
<dbReference type="SMR" id="O06901"/>
<dbReference type="CAZy" id="GH4">
    <property type="family name" value="Glycoside Hydrolase Family 4"/>
</dbReference>
<dbReference type="KEGG" id="ag:AAB63015"/>
<dbReference type="BRENDA" id="3.2.1.122">
    <property type="organism ID" value="1508"/>
</dbReference>
<dbReference type="SABIO-RK" id="O06901"/>
<dbReference type="UniPathway" id="UPA00150"/>
<dbReference type="GO" id="GO:0050081">
    <property type="term" value="F:maltose-6'-phosphate glucosidase activity"/>
    <property type="evidence" value="ECO:0007669"/>
    <property type="project" value="UniProtKB-EC"/>
</dbReference>
<dbReference type="GO" id="GO:0046872">
    <property type="term" value="F:metal ion binding"/>
    <property type="evidence" value="ECO:0007669"/>
    <property type="project" value="UniProtKB-KW"/>
</dbReference>
<dbReference type="GO" id="GO:0016616">
    <property type="term" value="F:oxidoreductase activity, acting on the CH-OH group of donors, NAD or NADP as acceptor"/>
    <property type="evidence" value="ECO:0007669"/>
    <property type="project" value="InterPro"/>
</dbReference>
<dbReference type="GO" id="GO:0000025">
    <property type="term" value="P:maltose catabolic process"/>
    <property type="evidence" value="ECO:0007669"/>
    <property type="project" value="UniProtKB-UniPathway"/>
</dbReference>
<dbReference type="CDD" id="cd05298">
    <property type="entry name" value="GH4_GlvA_pagL_like"/>
    <property type="match status" value="1"/>
</dbReference>
<dbReference type="Gene3D" id="3.90.110.10">
    <property type="entry name" value="Lactate dehydrogenase/glycoside hydrolase, family 4, C-terminal"/>
    <property type="match status" value="1"/>
</dbReference>
<dbReference type="Gene3D" id="3.40.50.720">
    <property type="entry name" value="NAD(P)-binding Rossmann-like Domain"/>
    <property type="match status" value="1"/>
</dbReference>
<dbReference type="InterPro" id="IPR019802">
    <property type="entry name" value="GlycHydrolase_4_CS"/>
</dbReference>
<dbReference type="InterPro" id="IPR001088">
    <property type="entry name" value="Glyco_hydro_4"/>
</dbReference>
<dbReference type="InterPro" id="IPR022616">
    <property type="entry name" value="Glyco_hydro_4_C"/>
</dbReference>
<dbReference type="InterPro" id="IPR015955">
    <property type="entry name" value="Lactate_DH/Glyco_Ohase_4_C"/>
</dbReference>
<dbReference type="InterPro" id="IPR036291">
    <property type="entry name" value="NAD(P)-bd_dom_sf"/>
</dbReference>
<dbReference type="PANTHER" id="PTHR32092">
    <property type="entry name" value="6-PHOSPHO-BETA-GLUCOSIDASE-RELATED"/>
    <property type="match status" value="1"/>
</dbReference>
<dbReference type="PANTHER" id="PTHR32092:SF14">
    <property type="entry name" value="MALTOSE-6'-PHOSPHATE GLUCOSIDASE"/>
    <property type="match status" value="1"/>
</dbReference>
<dbReference type="Pfam" id="PF02056">
    <property type="entry name" value="Glyco_hydro_4"/>
    <property type="match status" value="1"/>
</dbReference>
<dbReference type="Pfam" id="PF11975">
    <property type="entry name" value="Glyco_hydro_4C"/>
    <property type="match status" value="1"/>
</dbReference>
<dbReference type="PRINTS" id="PR00732">
    <property type="entry name" value="GLHYDRLASE4"/>
</dbReference>
<dbReference type="SUPFAM" id="SSF56327">
    <property type="entry name" value="LDH C-terminal domain-like"/>
    <property type="match status" value="1"/>
</dbReference>
<dbReference type="SUPFAM" id="SSF51735">
    <property type="entry name" value="NAD(P)-binding Rossmann-fold domains"/>
    <property type="match status" value="1"/>
</dbReference>
<dbReference type="PROSITE" id="PS01324">
    <property type="entry name" value="GLYCOSYL_HYDROL_F4"/>
    <property type="match status" value="1"/>
</dbReference>
<protein>
    <recommendedName>
        <fullName>Maltose-6'-phosphate glucosidase</fullName>
        <ecNumber>3.2.1.122</ecNumber>
    </recommendedName>
    <alternativeName>
        <fullName>6-phospho-alpha-D-glucosidase</fullName>
    </alternativeName>
</protein>
<sequence>MKQFSILIAGGGSTFTPGIILMLLDNLDKFPIRQIKMFDNDAERQAKIGEACAILLKEKAPQIKFSYSTNPEEAFTDIDFVMAHIRVGKYPMRELDEKIPLRHGVVGQETCGPGGIAYGMRSIGGVIGLIDYMEKYSPNAWMLNYSNPAAIVAEATRRLRPNSKVLNICDMPIGIEVRMAEILGLESRKDMDIMYYGLNHFGWWKSVRDKQGNDLMPKLREHVSQYGYVVPKGDNQHTEASWNDTFAKAKDVLALDPTTLPNTYLKYYLFPDYVVEHSNKEYTRANEVMDGREKFVFGECEKVVKNQSSEGCALHIDEHASYIVDLARAIAFNTKEKMLLIVENNGAIVNFDSTAMVEIPCIVGSNGPEPLVVGRIPQFQKGMMEQQVTVEKLTVEAWIEGSYQKLWQAITMSKTVPSAKVAKDILDDLIEANKEYWPVLK</sequence>
<name>MALH_FUSMR</name>
<keyword id="KW-0119">Carbohydrate metabolism</keyword>
<keyword id="KW-0170">Cobalt</keyword>
<keyword id="KW-0903">Direct protein sequencing</keyword>
<keyword id="KW-0326">Glycosidase</keyword>
<keyword id="KW-0378">Hydrolase</keyword>
<keyword id="KW-0408">Iron</keyword>
<keyword id="KW-0464">Manganese</keyword>
<keyword id="KW-0479">Metal-binding</keyword>
<keyword id="KW-0520">NAD</keyword>
<keyword id="KW-0533">Nickel</keyword>
<accession>O06901</accession>
<feature type="chain" id="PRO_0000169864" description="Maltose-6'-phosphate glucosidase">
    <location>
        <begin position="1"/>
        <end position="441"/>
    </location>
</feature>
<feature type="active site" description="Proton donor" evidence="1">
    <location>
        <position position="170"/>
    </location>
</feature>
<feature type="active site" description="Proton acceptor" evidence="1">
    <location>
        <position position="264"/>
    </location>
</feature>
<feature type="binding site" evidence="1">
    <location>
        <begin position="4"/>
        <end position="70"/>
    </location>
    <ligand>
        <name>NAD(+)</name>
        <dbReference type="ChEBI" id="CHEBI:57540"/>
    </ligand>
</feature>
<feature type="binding site" evidence="1">
    <location>
        <position position="93"/>
    </location>
    <ligand>
        <name>substrate</name>
    </ligand>
</feature>
<feature type="binding site" evidence="1">
    <location>
        <position position="147"/>
    </location>
    <ligand>
        <name>substrate</name>
    </ligand>
</feature>
<feature type="binding site" evidence="1">
    <location>
        <position position="169"/>
    </location>
    <ligand>
        <name>Mn(2+)</name>
        <dbReference type="ChEBI" id="CHEBI:29035"/>
    </ligand>
</feature>
<feature type="binding site" evidence="1">
    <location>
        <position position="200"/>
    </location>
    <ligand>
        <name>Mn(2+)</name>
        <dbReference type="ChEBI" id="CHEBI:29035"/>
    </ligand>
</feature>
<feature type="binding site" evidence="1">
    <location>
        <position position="284"/>
    </location>
    <ligand>
        <name>substrate</name>
    </ligand>
</feature>
<feature type="site" description="Increases basicity of active site Tyr" evidence="1">
    <location>
        <position position="109"/>
    </location>
</feature>